<name>ILVD_PSEA8</name>
<accession>B7V2R6</accession>
<dbReference type="EC" id="4.2.1.9" evidence="1"/>
<dbReference type="EMBL" id="FM209186">
    <property type="protein sequence ID" value="CAW25077.1"/>
    <property type="molecule type" value="Genomic_DNA"/>
</dbReference>
<dbReference type="RefSeq" id="WP_003084436.1">
    <property type="nucleotide sequence ID" value="NC_011770.1"/>
</dbReference>
<dbReference type="SMR" id="B7V2R6"/>
<dbReference type="KEGG" id="pag:PLES_03501"/>
<dbReference type="HOGENOM" id="CLU_014271_4_2_6"/>
<dbReference type="UniPathway" id="UPA00047">
    <property type="reaction ID" value="UER00057"/>
</dbReference>
<dbReference type="UniPathway" id="UPA00049">
    <property type="reaction ID" value="UER00061"/>
</dbReference>
<dbReference type="GO" id="GO:0005829">
    <property type="term" value="C:cytosol"/>
    <property type="evidence" value="ECO:0007669"/>
    <property type="project" value="TreeGrafter"/>
</dbReference>
<dbReference type="GO" id="GO:0051537">
    <property type="term" value="F:2 iron, 2 sulfur cluster binding"/>
    <property type="evidence" value="ECO:0007669"/>
    <property type="project" value="UniProtKB-UniRule"/>
</dbReference>
<dbReference type="GO" id="GO:0004160">
    <property type="term" value="F:dihydroxy-acid dehydratase activity"/>
    <property type="evidence" value="ECO:0007669"/>
    <property type="project" value="UniProtKB-UniRule"/>
</dbReference>
<dbReference type="GO" id="GO:0000287">
    <property type="term" value="F:magnesium ion binding"/>
    <property type="evidence" value="ECO:0007669"/>
    <property type="project" value="UniProtKB-UniRule"/>
</dbReference>
<dbReference type="GO" id="GO:0009097">
    <property type="term" value="P:isoleucine biosynthetic process"/>
    <property type="evidence" value="ECO:0007669"/>
    <property type="project" value="UniProtKB-UniRule"/>
</dbReference>
<dbReference type="GO" id="GO:0009099">
    <property type="term" value="P:L-valine biosynthetic process"/>
    <property type="evidence" value="ECO:0007669"/>
    <property type="project" value="UniProtKB-UniRule"/>
</dbReference>
<dbReference type="FunFam" id="3.50.30.80:FF:000001">
    <property type="entry name" value="Dihydroxy-acid dehydratase"/>
    <property type="match status" value="1"/>
</dbReference>
<dbReference type="Gene3D" id="3.50.30.80">
    <property type="entry name" value="IlvD/EDD C-terminal domain-like"/>
    <property type="match status" value="1"/>
</dbReference>
<dbReference type="HAMAP" id="MF_00012">
    <property type="entry name" value="IlvD"/>
    <property type="match status" value="1"/>
</dbReference>
<dbReference type="InterPro" id="IPR042096">
    <property type="entry name" value="Dihydro-acid_dehy_C"/>
</dbReference>
<dbReference type="InterPro" id="IPR004404">
    <property type="entry name" value="DihydroxyA_deHydtase"/>
</dbReference>
<dbReference type="InterPro" id="IPR020558">
    <property type="entry name" value="DiOHA_6PGluconate_deHydtase_CS"/>
</dbReference>
<dbReference type="InterPro" id="IPR056740">
    <property type="entry name" value="ILV_EDD_C"/>
</dbReference>
<dbReference type="InterPro" id="IPR000581">
    <property type="entry name" value="ILV_EDD_N"/>
</dbReference>
<dbReference type="InterPro" id="IPR037237">
    <property type="entry name" value="IlvD/EDD_N"/>
</dbReference>
<dbReference type="NCBIfam" id="TIGR00110">
    <property type="entry name" value="ilvD"/>
    <property type="match status" value="1"/>
</dbReference>
<dbReference type="NCBIfam" id="NF009103">
    <property type="entry name" value="PRK12448.1"/>
    <property type="match status" value="1"/>
</dbReference>
<dbReference type="PANTHER" id="PTHR43661">
    <property type="entry name" value="D-XYLONATE DEHYDRATASE"/>
    <property type="match status" value="1"/>
</dbReference>
<dbReference type="PANTHER" id="PTHR43661:SF3">
    <property type="entry name" value="D-XYLONATE DEHYDRATASE YAGF-RELATED"/>
    <property type="match status" value="1"/>
</dbReference>
<dbReference type="Pfam" id="PF24877">
    <property type="entry name" value="ILV_EDD_C"/>
    <property type="match status" value="1"/>
</dbReference>
<dbReference type="Pfam" id="PF00920">
    <property type="entry name" value="ILVD_EDD_N"/>
    <property type="match status" value="1"/>
</dbReference>
<dbReference type="SUPFAM" id="SSF143975">
    <property type="entry name" value="IlvD/EDD N-terminal domain-like"/>
    <property type="match status" value="1"/>
</dbReference>
<dbReference type="SUPFAM" id="SSF52016">
    <property type="entry name" value="LeuD/IlvD-like"/>
    <property type="match status" value="1"/>
</dbReference>
<dbReference type="PROSITE" id="PS00886">
    <property type="entry name" value="ILVD_EDD_1"/>
    <property type="match status" value="1"/>
</dbReference>
<dbReference type="PROSITE" id="PS00887">
    <property type="entry name" value="ILVD_EDD_2"/>
    <property type="match status" value="1"/>
</dbReference>
<organism>
    <name type="scientific">Pseudomonas aeruginosa (strain LESB58)</name>
    <dbReference type="NCBI Taxonomy" id="557722"/>
    <lineage>
        <taxon>Bacteria</taxon>
        <taxon>Pseudomonadati</taxon>
        <taxon>Pseudomonadota</taxon>
        <taxon>Gammaproteobacteria</taxon>
        <taxon>Pseudomonadales</taxon>
        <taxon>Pseudomonadaceae</taxon>
        <taxon>Pseudomonas</taxon>
    </lineage>
</organism>
<sequence length="612" mass="65160">MPDYRSKTSTHGRNMAGARALWRATGMKDEDFKKPIIAIANSFTQFVPGHVHLKDLGQLVAREIEKAGGVAKEFNTIAVDDGIAMGHDGMLYSLPSREIIADSVEYMVNAHCADAIVCISNCDKITPGMLMAALRLNIPVVFVSGGPMEAGKTKLASHGLDLVDAMVVAADDSCSDEKVAEYERSACPTCGSCSGMFTANSMNCLTEALGLSLPGNGSTLATHADREQLFLRAGRLAVELCQRYYGEGDDSVLPRNIANFKAFENAMTLDIAMGGSTNTILHLLAAAQEAEVPFDLRDIDRLSRKVPQLCKVAPNIQKYHMEDVHRAGGIFSILGELARGGLLHTDVPTVHSPSMADAIAQWDITQTRDEAVHTFFKAGPAGIPTQTAFSQNTRWPSLDDDRAEGCIRSVEHAYSKEGGLAVLYGNIALDGCVVKTAGVDESIHVFEGSAKIFESQDAAVKGILGDEVKAGDIVIIRYEGPKGGPGMQEMLYPTSYLKSKGLGKQCALLTDGRFSGGTSGLSIGHASPEAAAGGAIGLVQDGDKVLIDIPNRSINLLVSDEELAARRAEQDKKGWKPAAPRARRVSTALKAYALLATSADKGAVRNKALLDG</sequence>
<evidence type="ECO:0000255" key="1">
    <source>
        <dbReference type="HAMAP-Rule" id="MF_00012"/>
    </source>
</evidence>
<proteinExistence type="inferred from homology"/>
<keyword id="KW-0001">2Fe-2S</keyword>
<keyword id="KW-0028">Amino-acid biosynthesis</keyword>
<keyword id="KW-0100">Branched-chain amino acid biosynthesis</keyword>
<keyword id="KW-0408">Iron</keyword>
<keyword id="KW-0411">Iron-sulfur</keyword>
<keyword id="KW-0456">Lyase</keyword>
<keyword id="KW-0460">Magnesium</keyword>
<keyword id="KW-0479">Metal-binding</keyword>
<protein>
    <recommendedName>
        <fullName evidence="1">Dihydroxy-acid dehydratase</fullName>
        <shortName evidence="1">DAD</shortName>
        <ecNumber evidence="1">4.2.1.9</ecNumber>
    </recommendedName>
</protein>
<comment type="function">
    <text evidence="1">Functions in the biosynthesis of branched-chain amino acids. Catalyzes the dehydration of (2R,3R)-2,3-dihydroxy-3-methylpentanoate (2,3-dihydroxy-3-methylvalerate) into 2-oxo-3-methylpentanoate (2-oxo-3-methylvalerate) and of (2R)-2,3-dihydroxy-3-methylbutanoate (2,3-dihydroxyisovalerate) into 2-oxo-3-methylbutanoate (2-oxoisovalerate), the penultimate precursor to L-isoleucine and L-valine, respectively.</text>
</comment>
<comment type="catalytic activity">
    <reaction evidence="1">
        <text>(2R)-2,3-dihydroxy-3-methylbutanoate = 3-methyl-2-oxobutanoate + H2O</text>
        <dbReference type="Rhea" id="RHEA:24809"/>
        <dbReference type="ChEBI" id="CHEBI:11851"/>
        <dbReference type="ChEBI" id="CHEBI:15377"/>
        <dbReference type="ChEBI" id="CHEBI:49072"/>
        <dbReference type="EC" id="4.2.1.9"/>
    </reaction>
    <physiologicalReaction direction="left-to-right" evidence="1">
        <dbReference type="Rhea" id="RHEA:24810"/>
    </physiologicalReaction>
</comment>
<comment type="catalytic activity">
    <reaction evidence="1">
        <text>(2R,3R)-2,3-dihydroxy-3-methylpentanoate = (S)-3-methyl-2-oxopentanoate + H2O</text>
        <dbReference type="Rhea" id="RHEA:27694"/>
        <dbReference type="ChEBI" id="CHEBI:15377"/>
        <dbReference type="ChEBI" id="CHEBI:35146"/>
        <dbReference type="ChEBI" id="CHEBI:49258"/>
        <dbReference type="EC" id="4.2.1.9"/>
    </reaction>
    <physiologicalReaction direction="left-to-right" evidence="1">
        <dbReference type="Rhea" id="RHEA:27695"/>
    </physiologicalReaction>
</comment>
<comment type="cofactor">
    <cofactor evidence="1">
        <name>[2Fe-2S] cluster</name>
        <dbReference type="ChEBI" id="CHEBI:190135"/>
    </cofactor>
    <text evidence="1">Binds 1 [2Fe-2S] cluster per subunit. This cluster acts as a Lewis acid cofactor.</text>
</comment>
<comment type="cofactor">
    <cofactor evidence="1">
        <name>Mg(2+)</name>
        <dbReference type="ChEBI" id="CHEBI:18420"/>
    </cofactor>
</comment>
<comment type="pathway">
    <text evidence="1">Amino-acid biosynthesis; L-isoleucine biosynthesis; L-isoleucine from 2-oxobutanoate: step 3/4.</text>
</comment>
<comment type="pathway">
    <text evidence="1">Amino-acid biosynthesis; L-valine biosynthesis; L-valine from pyruvate: step 3/4.</text>
</comment>
<comment type="subunit">
    <text evidence="1">Homodimer.</text>
</comment>
<comment type="similarity">
    <text evidence="1">Belongs to the IlvD/Edd family.</text>
</comment>
<feature type="chain" id="PRO_1000116277" description="Dihydroxy-acid dehydratase">
    <location>
        <begin position="1"/>
        <end position="612"/>
    </location>
</feature>
<feature type="active site" description="Proton acceptor" evidence="1">
    <location>
        <position position="515"/>
    </location>
</feature>
<feature type="binding site" evidence="1">
    <location>
        <position position="81"/>
    </location>
    <ligand>
        <name>Mg(2+)</name>
        <dbReference type="ChEBI" id="CHEBI:18420"/>
    </ligand>
</feature>
<feature type="binding site" evidence="1">
    <location>
        <position position="122"/>
    </location>
    <ligand>
        <name>[2Fe-2S] cluster</name>
        <dbReference type="ChEBI" id="CHEBI:190135"/>
    </ligand>
</feature>
<feature type="binding site" evidence="1">
    <location>
        <position position="123"/>
    </location>
    <ligand>
        <name>Mg(2+)</name>
        <dbReference type="ChEBI" id="CHEBI:18420"/>
    </ligand>
</feature>
<feature type="binding site" description="via carbamate group" evidence="1">
    <location>
        <position position="124"/>
    </location>
    <ligand>
        <name>Mg(2+)</name>
        <dbReference type="ChEBI" id="CHEBI:18420"/>
    </ligand>
</feature>
<feature type="binding site" evidence="1">
    <location>
        <position position="193"/>
    </location>
    <ligand>
        <name>[2Fe-2S] cluster</name>
        <dbReference type="ChEBI" id="CHEBI:190135"/>
    </ligand>
</feature>
<feature type="binding site" evidence="1">
    <location>
        <position position="489"/>
    </location>
    <ligand>
        <name>Mg(2+)</name>
        <dbReference type="ChEBI" id="CHEBI:18420"/>
    </ligand>
</feature>
<feature type="modified residue" description="N6-carboxylysine" evidence="1">
    <location>
        <position position="124"/>
    </location>
</feature>
<gene>
    <name evidence="1" type="primary">ilvD</name>
    <name type="ordered locus">PLES_03501</name>
</gene>
<reference key="1">
    <citation type="journal article" date="2009" name="Genome Res.">
        <title>Newly introduced genomic prophage islands are critical determinants of in vivo competitiveness in the Liverpool epidemic strain of Pseudomonas aeruginosa.</title>
        <authorList>
            <person name="Winstanley C."/>
            <person name="Langille M.G.I."/>
            <person name="Fothergill J.L."/>
            <person name="Kukavica-Ibrulj I."/>
            <person name="Paradis-Bleau C."/>
            <person name="Sanschagrin F."/>
            <person name="Thomson N.R."/>
            <person name="Winsor G.L."/>
            <person name="Quail M.A."/>
            <person name="Lennard N."/>
            <person name="Bignell A."/>
            <person name="Clarke L."/>
            <person name="Seeger K."/>
            <person name="Saunders D."/>
            <person name="Harris D."/>
            <person name="Parkhill J."/>
            <person name="Hancock R.E.W."/>
            <person name="Brinkman F.S.L."/>
            <person name="Levesque R.C."/>
        </authorList>
    </citation>
    <scope>NUCLEOTIDE SEQUENCE [LARGE SCALE GENOMIC DNA]</scope>
    <source>
        <strain>LESB58</strain>
    </source>
</reference>